<gene>
    <name type="primary">bla</name>
    <name type="synonym">kpc</name>
    <name type="synonym">kpc2</name>
</gene>
<dbReference type="EC" id="3.5.2.6"/>
<dbReference type="EMBL" id="AY210886">
    <property type="protein sequence ID" value="AAO53443.1"/>
    <property type="molecule type" value="Genomic_DNA"/>
</dbReference>
<dbReference type="PDB" id="5MGI">
    <property type="method" value="X-ray"/>
    <property type="resolution" value="1.50 A"/>
    <property type="chains" value="A=26-289"/>
</dbReference>
<dbReference type="PDBsum" id="5MGI"/>
<dbReference type="SMR" id="Q848S6"/>
<dbReference type="BindingDB" id="Q848S6"/>
<dbReference type="ChEMBL" id="CHEMBL3562180"/>
<dbReference type="OrthoDB" id="9784149at2"/>
<dbReference type="GO" id="GO:0008800">
    <property type="term" value="F:beta-lactamase activity"/>
    <property type="evidence" value="ECO:0007669"/>
    <property type="project" value="UniProtKB-EC"/>
</dbReference>
<dbReference type="GO" id="GO:0030655">
    <property type="term" value="P:beta-lactam antibiotic catabolic process"/>
    <property type="evidence" value="ECO:0007669"/>
    <property type="project" value="InterPro"/>
</dbReference>
<dbReference type="GO" id="GO:0046677">
    <property type="term" value="P:response to antibiotic"/>
    <property type="evidence" value="ECO:0007669"/>
    <property type="project" value="UniProtKB-KW"/>
</dbReference>
<dbReference type="Gene3D" id="3.40.710.10">
    <property type="entry name" value="DD-peptidase/beta-lactamase superfamily"/>
    <property type="match status" value="1"/>
</dbReference>
<dbReference type="InterPro" id="IPR012338">
    <property type="entry name" value="Beta-lactam/transpept-like"/>
</dbReference>
<dbReference type="InterPro" id="IPR045155">
    <property type="entry name" value="Beta-lactam_cat"/>
</dbReference>
<dbReference type="InterPro" id="IPR000871">
    <property type="entry name" value="Beta-lactam_class-A"/>
</dbReference>
<dbReference type="NCBIfam" id="NF033103">
    <property type="entry name" value="bla_class_A"/>
    <property type="match status" value="1"/>
</dbReference>
<dbReference type="NCBIfam" id="NF012141">
    <property type="entry name" value="blaKPC"/>
    <property type="match status" value="1"/>
</dbReference>
<dbReference type="NCBIfam" id="NF000538">
    <property type="entry name" value="classA_carba"/>
    <property type="match status" value="1"/>
</dbReference>
<dbReference type="PANTHER" id="PTHR35333">
    <property type="entry name" value="BETA-LACTAMASE"/>
    <property type="match status" value="1"/>
</dbReference>
<dbReference type="PANTHER" id="PTHR35333:SF3">
    <property type="entry name" value="BETA-LACTAMASE-TYPE TRANSPEPTIDASE FOLD CONTAINING PROTEIN"/>
    <property type="match status" value="1"/>
</dbReference>
<dbReference type="Pfam" id="PF13354">
    <property type="entry name" value="Beta-lactamase2"/>
    <property type="match status" value="1"/>
</dbReference>
<dbReference type="PRINTS" id="PR00118">
    <property type="entry name" value="BLACTAMASEA"/>
</dbReference>
<dbReference type="SUPFAM" id="SSF56601">
    <property type="entry name" value="beta-lactamase/transpeptidase-like"/>
    <property type="match status" value="1"/>
</dbReference>
<proteinExistence type="evidence at protein level"/>
<accession>Q848S6</accession>
<sequence length="293" mass="31115">MSLYRRLVLLSCLSWPLAGFSATALTNLVAEPFAKLEQDFGGSIGVYAMDTGSGATVSYRAEERFPLCSSFKGFLAAAVLARSQQQAGLLDTPIRYGKNALVPWSPISEKYLTTGMTVAELSAAAVQYSDNAAANLLLKELGGPAGLTAFMRSIGDTTFRLDRWELELNSAIPGDARDTSSPRAVTESLQKLTLGSALAAPQRQQFVDWLKGNTTGNHRIRAAVPADWAVGDKTGTCGVYGTANDYAVVWPTGRAPIVLAVYTRAPNKDDKHSEAVIAAAARLALEGLGVNGQ</sequence>
<feature type="signal peptide" evidence="2">
    <location>
        <begin position="1"/>
        <end position="24"/>
    </location>
</feature>
<feature type="chain" id="PRO_0000349144" description="Carbapenem-hydrolyzing beta-lactamase KPC">
    <location>
        <begin position="25"/>
        <end position="293"/>
    </location>
</feature>
<feature type="active site" description="Acyl-ester intermediate" evidence="1">
    <location>
        <position position="69"/>
    </location>
</feature>
<feature type="active site" description="Proton acceptor" evidence="1">
    <location>
        <position position="167"/>
    </location>
</feature>
<feature type="binding site" evidence="1">
    <location>
        <begin position="233"/>
        <end position="235"/>
    </location>
    <ligand>
        <name>substrate</name>
    </ligand>
</feature>
<feature type="turn" evidence="6">
    <location>
        <begin position="28"/>
        <end position="30"/>
    </location>
</feature>
<feature type="helix" evidence="6">
    <location>
        <begin position="31"/>
        <end position="40"/>
    </location>
</feature>
<feature type="strand" evidence="6">
    <location>
        <begin position="42"/>
        <end position="50"/>
    </location>
</feature>
<feature type="turn" evidence="6">
    <location>
        <begin position="51"/>
        <end position="53"/>
    </location>
</feature>
<feature type="strand" evidence="6">
    <location>
        <begin position="56"/>
        <end position="60"/>
    </location>
</feature>
<feature type="helix" evidence="6">
    <location>
        <begin position="68"/>
        <end position="70"/>
    </location>
</feature>
<feature type="helix" evidence="6">
    <location>
        <begin position="71"/>
        <end position="83"/>
    </location>
</feature>
<feature type="helix" evidence="6">
    <location>
        <begin position="98"/>
        <end position="100"/>
    </location>
</feature>
<feature type="helix" evidence="6">
    <location>
        <begin position="106"/>
        <end position="110"/>
    </location>
</feature>
<feature type="turn" evidence="6">
    <location>
        <begin position="111"/>
        <end position="114"/>
    </location>
</feature>
<feature type="helix" evidence="6">
    <location>
        <begin position="118"/>
        <end position="127"/>
    </location>
</feature>
<feature type="helix" evidence="6">
    <location>
        <begin position="131"/>
        <end position="140"/>
    </location>
</feature>
<feature type="helix" evidence="6">
    <location>
        <begin position="143"/>
        <end position="153"/>
    </location>
</feature>
<feature type="helix" evidence="6">
    <location>
        <begin position="167"/>
        <end position="169"/>
    </location>
</feature>
<feature type="helix" evidence="6">
    <location>
        <begin position="182"/>
        <end position="193"/>
    </location>
</feature>
<feature type="strand" evidence="6">
    <location>
        <begin position="195"/>
        <end position="198"/>
    </location>
</feature>
<feature type="helix" evidence="6">
    <location>
        <begin position="200"/>
        <end position="211"/>
    </location>
</feature>
<feature type="turn" evidence="6">
    <location>
        <begin position="217"/>
        <end position="219"/>
    </location>
</feature>
<feature type="helix" evidence="6">
    <location>
        <begin position="220"/>
        <end position="223"/>
    </location>
</feature>
<feature type="strand" evidence="6">
    <location>
        <begin position="228"/>
        <end position="236"/>
    </location>
</feature>
<feature type="helix" evidence="6">
    <location>
        <begin position="239"/>
        <end position="241"/>
    </location>
</feature>
<feature type="strand" evidence="6">
    <location>
        <begin position="243"/>
        <end position="250"/>
    </location>
</feature>
<feature type="strand" evidence="6">
    <location>
        <begin position="257"/>
        <end position="264"/>
    </location>
</feature>
<feature type="helix" evidence="6">
    <location>
        <begin position="274"/>
        <end position="287"/>
    </location>
</feature>
<geneLocation type="plasmid">
    <name>conjugative 70kb</name>
</geneLocation>
<comment type="function">
    <text>Hydrolyzes carbapenems, penicillins, cephalosporins and aztreonam with varying efficiency.</text>
</comment>
<comment type="catalytic activity">
    <reaction>
        <text>a beta-lactam + H2O = a substituted beta-amino acid</text>
        <dbReference type="Rhea" id="RHEA:20401"/>
        <dbReference type="ChEBI" id="CHEBI:15377"/>
        <dbReference type="ChEBI" id="CHEBI:35627"/>
        <dbReference type="ChEBI" id="CHEBI:140347"/>
        <dbReference type="EC" id="3.5.2.6"/>
    </reaction>
</comment>
<comment type="activity regulation">
    <text evidence="3">Not inhibited by EDTA, inhibited by clavulanic acid and tazobactam.</text>
</comment>
<comment type="miscellaneous">
    <text>Initially two different KPC beta-lactamases were identified from two different bacteria (KPC-1 and KPC-2); they were later shown to be identical.</text>
</comment>
<comment type="miscellaneous">
    <text evidence="5">The class A beta-lactamase family has a specific amino-acid numbering system, sometimes called Ambler or ABL numbering and often misspelt as Amber. A multiple sequence alignment was used to derive a consensus sequence and then the consensus was numbered taking into account insertions and deletions. This allows use of identical numbers, e.g. for active site residues, despite differences in protein length. UniProt always uses natural numbering of residues, hence there appear to be differences in numbering between this entry and some papers.</text>
</comment>
<comment type="similarity">
    <text evidence="4">Belongs to the class-A beta-lactamase family.</text>
</comment>
<keyword id="KW-0002">3D-structure</keyword>
<keyword id="KW-0046">Antibiotic resistance</keyword>
<keyword id="KW-0378">Hydrolase</keyword>
<keyword id="KW-0614">Plasmid</keyword>
<keyword id="KW-0732">Signal</keyword>
<reference key="1">
    <citation type="journal article" date="2003" name="Antimicrob. Agents Chemother.">
        <title>Carbapenem-resistant strain of Klebsiella oxytoca harboring carbapenem-hydrolyzing beta-lactamase KPC-2.</title>
        <authorList>
            <person name="Yigit H."/>
            <person name="Queenan A.M."/>
            <person name="Rasheed J.K."/>
            <person name="Biddle J.W."/>
            <person name="Domenech-Sanchez A."/>
            <person name="Alberti S."/>
            <person name="Bush K."/>
            <person name="Tenover F.C."/>
        </authorList>
    </citation>
    <scope>NUCLEOTIDE SEQUENCE [GENOMIC DNA]</scope>
    <scope>SUBSTRATES</scope>
    <scope>ACTIVITY REGULATION</scope>
    <source>
        <strain>3127</strain>
    </source>
</reference>
<reference key="2">
    <citation type="journal article" date="1991" name="Biochem. J.">
        <title>A standard numbering scheme for the class A beta-lactamases.</title>
        <authorList>
            <person name="Ambler R.P."/>
            <person name="Coulson A.F."/>
            <person name="Frere J.M."/>
            <person name="Ghuysen J.M."/>
            <person name="Joris B."/>
            <person name="Forsman M."/>
            <person name="Levesque R.C."/>
            <person name="Tiraby G."/>
            <person name="Waley S.G."/>
        </authorList>
    </citation>
    <scope>AMINO ACID NUMBERING SCHEME</scope>
</reference>
<name>BLKPC_KLEOX</name>
<protein>
    <recommendedName>
        <fullName>Carbapenem-hydrolyzing beta-lactamase KPC</fullName>
        <ecNumber>3.5.2.6</ecNumber>
    </recommendedName>
    <alternativeName>
        <fullName>Carbapenem-hydrolyzing beta-lactamase KPC-2</fullName>
    </alternativeName>
</protein>
<evidence type="ECO:0000250" key="1"/>
<evidence type="ECO:0000255" key="2"/>
<evidence type="ECO:0000269" key="3">
    <source>
    </source>
</evidence>
<evidence type="ECO:0000305" key="4"/>
<evidence type="ECO:0000305" key="5">
    <source>
    </source>
</evidence>
<evidence type="ECO:0007829" key="6">
    <source>
        <dbReference type="PDB" id="5MGI"/>
    </source>
</evidence>
<organism>
    <name type="scientific">Klebsiella oxytoca</name>
    <dbReference type="NCBI Taxonomy" id="571"/>
    <lineage>
        <taxon>Bacteria</taxon>
        <taxon>Pseudomonadati</taxon>
        <taxon>Pseudomonadota</taxon>
        <taxon>Gammaproteobacteria</taxon>
        <taxon>Enterobacterales</taxon>
        <taxon>Enterobacteriaceae</taxon>
        <taxon>Klebsiella/Raoultella group</taxon>
        <taxon>Klebsiella</taxon>
    </lineage>
</organism>